<keyword id="KW-0378">Hydrolase</keyword>
<keyword id="KW-0479">Metal-binding</keyword>
<keyword id="KW-0482">Metalloprotease</keyword>
<keyword id="KW-0645">Protease</keyword>
<keyword id="KW-1185">Reference proteome</keyword>
<keyword id="KW-0862">Zinc</keyword>
<comment type="similarity">
    <text evidence="2">Belongs to the UPF0758 family.</text>
</comment>
<sequence>MSISDWPEAERPREKLLKNGPAYLSDAELLAIFLRTGIAGKSAVDLARELLKRFRGLTGLFAADQGAFCQVPGMGPAKFAQLQAVLEMARRALEEELKSSDAMDSPGPVRAFLRLSLEGKEHEVFVSIFLDARNRVIATEELFQGTLTQTSVYPREVVKRALHHNAAAVIFAHNHPSGAAEPSHADAVLTQSLKQALLLVDVRVLDHFIVGRGATLSFAEQGLI</sequence>
<protein>
    <recommendedName>
        <fullName>UPF0758 protein Nmul_A2138</fullName>
    </recommendedName>
</protein>
<evidence type="ECO:0000255" key="1">
    <source>
        <dbReference type="PROSITE-ProRule" id="PRU01182"/>
    </source>
</evidence>
<evidence type="ECO:0000305" key="2"/>
<organism>
    <name type="scientific">Nitrosospira multiformis (strain ATCC 25196 / NCIMB 11849 / C 71)</name>
    <dbReference type="NCBI Taxonomy" id="323848"/>
    <lineage>
        <taxon>Bacteria</taxon>
        <taxon>Pseudomonadati</taxon>
        <taxon>Pseudomonadota</taxon>
        <taxon>Betaproteobacteria</taxon>
        <taxon>Nitrosomonadales</taxon>
        <taxon>Nitrosomonadaceae</taxon>
        <taxon>Nitrosospira</taxon>
    </lineage>
</organism>
<accession>Q2Y740</accession>
<reference key="1">
    <citation type="submission" date="2005-08" db="EMBL/GenBank/DDBJ databases">
        <title>Complete sequence of chromosome 1 of Nitrosospira multiformis ATCC 25196.</title>
        <authorList>
            <person name="Copeland A."/>
            <person name="Lucas S."/>
            <person name="Lapidus A."/>
            <person name="Barry K."/>
            <person name="Detter J.C."/>
            <person name="Glavina T."/>
            <person name="Hammon N."/>
            <person name="Israni S."/>
            <person name="Pitluck S."/>
            <person name="Chain P."/>
            <person name="Malfatti S."/>
            <person name="Shin M."/>
            <person name="Vergez L."/>
            <person name="Schmutz J."/>
            <person name="Larimer F."/>
            <person name="Land M."/>
            <person name="Hauser L."/>
            <person name="Kyrpides N."/>
            <person name="Lykidis A."/>
            <person name="Richardson P."/>
        </authorList>
    </citation>
    <scope>NUCLEOTIDE SEQUENCE [LARGE SCALE GENOMIC DNA]</scope>
    <source>
        <strain>ATCC 25196 / NCIMB 11849 / C 71</strain>
    </source>
</reference>
<gene>
    <name type="ordered locus">Nmul_A2138</name>
</gene>
<feature type="chain" id="PRO_1000001671" description="UPF0758 protein Nmul_A2138">
    <location>
        <begin position="1"/>
        <end position="224"/>
    </location>
</feature>
<feature type="domain" description="MPN" evidence="1">
    <location>
        <begin position="102"/>
        <end position="224"/>
    </location>
</feature>
<feature type="short sequence motif" description="JAMM motif" evidence="1">
    <location>
        <begin position="173"/>
        <end position="186"/>
    </location>
</feature>
<feature type="binding site" evidence="1">
    <location>
        <position position="173"/>
    </location>
    <ligand>
        <name>Zn(2+)</name>
        <dbReference type="ChEBI" id="CHEBI:29105"/>
        <note>catalytic</note>
    </ligand>
</feature>
<feature type="binding site" evidence="1">
    <location>
        <position position="175"/>
    </location>
    <ligand>
        <name>Zn(2+)</name>
        <dbReference type="ChEBI" id="CHEBI:29105"/>
        <note>catalytic</note>
    </ligand>
</feature>
<feature type="binding site" evidence="1">
    <location>
        <position position="186"/>
    </location>
    <ligand>
        <name>Zn(2+)</name>
        <dbReference type="ChEBI" id="CHEBI:29105"/>
        <note>catalytic</note>
    </ligand>
</feature>
<proteinExistence type="inferred from homology"/>
<name>Y2138_NITMU</name>
<dbReference type="EMBL" id="CP000103">
    <property type="protein sequence ID" value="ABB75431.1"/>
    <property type="molecule type" value="Genomic_DNA"/>
</dbReference>
<dbReference type="RefSeq" id="WP_011381440.1">
    <property type="nucleotide sequence ID" value="NC_007614.1"/>
</dbReference>
<dbReference type="SMR" id="Q2Y740"/>
<dbReference type="STRING" id="323848.Nmul_A2138"/>
<dbReference type="KEGG" id="nmu:Nmul_A2138"/>
<dbReference type="eggNOG" id="COG2003">
    <property type="taxonomic scope" value="Bacteria"/>
</dbReference>
<dbReference type="HOGENOM" id="CLU_073529_0_1_4"/>
<dbReference type="OrthoDB" id="9804482at2"/>
<dbReference type="Proteomes" id="UP000002718">
    <property type="component" value="Chromosome"/>
</dbReference>
<dbReference type="GO" id="GO:0046872">
    <property type="term" value="F:metal ion binding"/>
    <property type="evidence" value="ECO:0007669"/>
    <property type="project" value="UniProtKB-KW"/>
</dbReference>
<dbReference type="GO" id="GO:0008237">
    <property type="term" value="F:metallopeptidase activity"/>
    <property type="evidence" value="ECO:0007669"/>
    <property type="project" value="UniProtKB-KW"/>
</dbReference>
<dbReference type="GO" id="GO:0006508">
    <property type="term" value="P:proteolysis"/>
    <property type="evidence" value="ECO:0007669"/>
    <property type="project" value="UniProtKB-KW"/>
</dbReference>
<dbReference type="CDD" id="cd08071">
    <property type="entry name" value="MPN_DUF2466"/>
    <property type="match status" value="1"/>
</dbReference>
<dbReference type="Gene3D" id="3.40.140.10">
    <property type="entry name" value="Cytidine Deaminase, domain 2"/>
    <property type="match status" value="1"/>
</dbReference>
<dbReference type="InterPro" id="IPR037518">
    <property type="entry name" value="MPN"/>
</dbReference>
<dbReference type="InterPro" id="IPR025657">
    <property type="entry name" value="RadC_JAB"/>
</dbReference>
<dbReference type="InterPro" id="IPR010994">
    <property type="entry name" value="RuvA_2-like"/>
</dbReference>
<dbReference type="InterPro" id="IPR001405">
    <property type="entry name" value="UPF0758"/>
</dbReference>
<dbReference type="InterPro" id="IPR020891">
    <property type="entry name" value="UPF0758_CS"/>
</dbReference>
<dbReference type="InterPro" id="IPR046778">
    <property type="entry name" value="UPF0758_N"/>
</dbReference>
<dbReference type="NCBIfam" id="NF000642">
    <property type="entry name" value="PRK00024.1"/>
    <property type="match status" value="1"/>
</dbReference>
<dbReference type="NCBIfam" id="TIGR00608">
    <property type="entry name" value="radc"/>
    <property type="match status" value="1"/>
</dbReference>
<dbReference type="PANTHER" id="PTHR30471">
    <property type="entry name" value="DNA REPAIR PROTEIN RADC"/>
    <property type="match status" value="1"/>
</dbReference>
<dbReference type="PANTHER" id="PTHR30471:SF3">
    <property type="entry name" value="UPF0758 PROTEIN YEES-RELATED"/>
    <property type="match status" value="1"/>
</dbReference>
<dbReference type="Pfam" id="PF04002">
    <property type="entry name" value="RadC"/>
    <property type="match status" value="1"/>
</dbReference>
<dbReference type="Pfam" id="PF20582">
    <property type="entry name" value="UPF0758_N"/>
    <property type="match status" value="1"/>
</dbReference>
<dbReference type="SUPFAM" id="SSF102712">
    <property type="entry name" value="JAB1/MPN domain"/>
    <property type="match status" value="1"/>
</dbReference>
<dbReference type="SUPFAM" id="SSF47781">
    <property type="entry name" value="RuvA domain 2-like"/>
    <property type="match status" value="1"/>
</dbReference>
<dbReference type="PROSITE" id="PS50249">
    <property type="entry name" value="MPN"/>
    <property type="match status" value="1"/>
</dbReference>
<dbReference type="PROSITE" id="PS01302">
    <property type="entry name" value="UPF0758"/>
    <property type="match status" value="1"/>
</dbReference>